<keyword id="KW-0687">Ribonucleoprotein</keyword>
<keyword id="KW-0689">Ribosomal protein</keyword>
<keyword id="KW-0694">RNA-binding</keyword>
<keyword id="KW-0699">rRNA-binding</keyword>
<evidence type="ECO:0000255" key="1">
    <source>
        <dbReference type="HAMAP-Rule" id="MF_00382"/>
    </source>
</evidence>
<evidence type="ECO:0000305" key="2"/>
<accession>Q4KEW1</accession>
<comment type="function">
    <text evidence="1">Binds directly to 23S ribosomal RNA and is necessary for the in vitro assembly process of the 50S ribosomal subunit. It is not involved in the protein synthesizing functions of that subunit.</text>
</comment>
<comment type="similarity">
    <text evidence="1">Belongs to the bacterial ribosomal protein bL20 family.</text>
</comment>
<organism>
    <name type="scientific">Pseudomonas fluorescens (strain ATCC BAA-477 / NRRL B-23932 / Pf-5)</name>
    <dbReference type="NCBI Taxonomy" id="220664"/>
    <lineage>
        <taxon>Bacteria</taxon>
        <taxon>Pseudomonadati</taxon>
        <taxon>Pseudomonadota</taxon>
        <taxon>Gammaproteobacteria</taxon>
        <taxon>Pseudomonadales</taxon>
        <taxon>Pseudomonadaceae</taxon>
        <taxon>Pseudomonas</taxon>
    </lineage>
</organism>
<protein>
    <recommendedName>
        <fullName evidence="1">Large ribosomal subunit protein bL20</fullName>
    </recommendedName>
    <alternativeName>
        <fullName evidence="2">50S ribosomal protein L20</fullName>
    </alternativeName>
</protein>
<proteinExistence type="inferred from homology"/>
<feature type="chain" id="PRO_0000243715" description="Large ribosomal subunit protein bL20">
    <location>
        <begin position="1"/>
        <end position="118"/>
    </location>
</feature>
<gene>
    <name evidence="1" type="primary">rplT</name>
    <name type="ordered locus">PFL_2114</name>
</gene>
<sequence>MARVKRGVIARKRHKKILKLAKGYYGARSRVFRVAKQAVIKAGQYAYRDRRQKKRQFRALWIARINAGARNNGLSYSRLIAGLKKASIEIDRKVLADLAVNEKAAFAAIVEKAKATLA</sequence>
<dbReference type="EMBL" id="CP000076">
    <property type="protein sequence ID" value="AAY91389.1"/>
    <property type="molecule type" value="Genomic_DNA"/>
</dbReference>
<dbReference type="RefSeq" id="WP_011060418.1">
    <property type="nucleotide sequence ID" value="NC_004129.6"/>
</dbReference>
<dbReference type="SMR" id="Q4KEW1"/>
<dbReference type="STRING" id="220664.PFL_2114"/>
<dbReference type="GeneID" id="57475156"/>
<dbReference type="KEGG" id="pfl:PFL_2114"/>
<dbReference type="eggNOG" id="COG0292">
    <property type="taxonomic scope" value="Bacteria"/>
</dbReference>
<dbReference type="HOGENOM" id="CLU_123265_0_1_6"/>
<dbReference type="Proteomes" id="UP000008540">
    <property type="component" value="Chromosome"/>
</dbReference>
<dbReference type="GO" id="GO:1990904">
    <property type="term" value="C:ribonucleoprotein complex"/>
    <property type="evidence" value="ECO:0007669"/>
    <property type="project" value="UniProtKB-KW"/>
</dbReference>
<dbReference type="GO" id="GO:0005840">
    <property type="term" value="C:ribosome"/>
    <property type="evidence" value="ECO:0007669"/>
    <property type="project" value="UniProtKB-KW"/>
</dbReference>
<dbReference type="GO" id="GO:0019843">
    <property type="term" value="F:rRNA binding"/>
    <property type="evidence" value="ECO:0007669"/>
    <property type="project" value="UniProtKB-UniRule"/>
</dbReference>
<dbReference type="GO" id="GO:0003735">
    <property type="term" value="F:structural constituent of ribosome"/>
    <property type="evidence" value="ECO:0007669"/>
    <property type="project" value="InterPro"/>
</dbReference>
<dbReference type="GO" id="GO:0000027">
    <property type="term" value="P:ribosomal large subunit assembly"/>
    <property type="evidence" value="ECO:0007669"/>
    <property type="project" value="UniProtKB-UniRule"/>
</dbReference>
<dbReference type="GO" id="GO:0006412">
    <property type="term" value="P:translation"/>
    <property type="evidence" value="ECO:0007669"/>
    <property type="project" value="InterPro"/>
</dbReference>
<dbReference type="CDD" id="cd07026">
    <property type="entry name" value="Ribosomal_L20"/>
    <property type="match status" value="1"/>
</dbReference>
<dbReference type="FunFam" id="1.10.1900.20:FF:000001">
    <property type="entry name" value="50S ribosomal protein L20"/>
    <property type="match status" value="1"/>
</dbReference>
<dbReference type="Gene3D" id="6.10.160.10">
    <property type="match status" value="1"/>
</dbReference>
<dbReference type="Gene3D" id="1.10.1900.20">
    <property type="entry name" value="Ribosomal protein L20"/>
    <property type="match status" value="1"/>
</dbReference>
<dbReference type="HAMAP" id="MF_00382">
    <property type="entry name" value="Ribosomal_bL20"/>
    <property type="match status" value="1"/>
</dbReference>
<dbReference type="InterPro" id="IPR005813">
    <property type="entry name" value="Ribosomal_bL20"/>
</dbReference>
<dbReference type="InterPro" id="IPR049946">
    <property type="entry name" value="RIBOSOMAL_L20_CS"/>
</dbReference>
<dbReference type="InterPro" id="IPR035566">
    <property type="entry name" value="Ribosomal_protein_bL20_C"/>
</dbReference>
<dbReference type="NCBIfam" id="TIGR01032">
    <property type="entry name" value="rplT_bact"/>
    <property type="match status" value="1"/>
</dbReference>
<dbReference type="PANTHER" id="PTHR10986">
    <property type="entry name" value="39S RIBOSOMAL PROTEIN L20"/>
    <property type="match status" value="1"/>
</dbReference>
<dbReference type="Pfam" id="PF00453">
    <property type="entry name" value="Ribosomal_L20"/>
    <property type="match status" value="1"/>
</dbReference>
<dbReference type="PRINTS" id="PR00062">
    <property type="entry name" value="RIBOSOMALL20"/>
</dbReference>
<dbReference type="SUPFAM" id="SSF74731">
    <property type="entry name" value="Ribosomal protein L20"/>
    <property type="match status" value="1"/>
</dbReference>
<dbReference type="PROSITE" id="PS00937">
    <property type="entry name" value="RIBOSOMAL_L20"/>
    <property type="match status" value="1"/>
</dbReference>
<reference key="1">
    <citation type="journal article" date="2005" name="Nat. Biotechnol.">
        <title>Complete genome sequence of the plant commensal Pseudomonas fluorescens Pf-5.</title>
        <authorList>
            <person name="Paulsen I.T."/>
            <person name="Press C.M."/>
            <person name="Ravel J."/>
            <person name="Kobayashi D.Y."/>
            <person name="Myers G.S.A."/>
            <person name="Mavrodi D.V."/>
            <person name="DeBoy R.T."/>
            <person name="Seshadri R."/>
            <person name="Ren Q."/>
            <person name="Madupu R."/>
            <person name="Dodson R.J."/>
            <person name="Durkin A.S."/>
            <person name="Brinkac L.M."/>
            <person name="Daugherty S.C."/>
            <person name="Sullivan S.A."/>
            <person name="Rosovitz M.J."/>
            <person name="Gwinn M.L."/>
            <person name="Zhou L."/>
            <person name="Schneider D.J."/>
            <person name="Cartinhour S.W."/>
            <person name="Nelson W.C."/>
            <person name="Weidman J."/>
            <person name="Watkins K."/>
            <person name="Tran K."/>
            <person name="Khouri H."/>
            <person name="Pierson E.A."/>
            <person name="Pierson L.S. III"/>
            <person name="Thomashow L.S."/>
            <person name="Loper J.E."/>
        </authorList>
    </citation>
    <scope>NUCLEOTIDE SEQUENCE [LARGE SCALE GENOMIC DNA]</scope>
    <source>
        <strain>ATCC BAA-477 / NRRL B-23932 / Pf-5</strain>
    </source>
</reference>
<name>RL20_PSEF5</name>